<comment type="function">
    <text evidence="1">Deacetylates O-acetyl-ADP ribose to yield ADP-ribose and free acetate. Down-regulates ribonuclease 3 (RNase III) activity. Acts by interacting directly with the region of the ribonuclease that is required for dimerization/activation.</text>
</comment>
<comment type="catalytic activity">
    <reaction evidence="1">
        <text>3''-O-acetyl-ADP-D-ribose + H2O = ADP-D-ribose + acetate + H(+)</text>
        <dbReference type="Rhea" id="RHEA:59244"/>
        <dbReference type="ChEBI" id="CHEBI:15377"/>
        <dbReference type="ChEBI" id="CHEBI:15378"/>
        <dbReference type="ChEBI" id="CHEBI:30089"/>
        <dbReference type="ChEBI" id="CHEBI:57967"/>
        <dbReference type="ChEBI" id="CHEBI:142723"/>
        <dbReference type="EC" id="3.1.1.106"/>
    </reaction>
</comment>
<comment type="catalytic activity">
    <reaction evidence="1">
        <text>2''-O-acetyl-ADP-D-ribose + H2O = ADP-D-ribose + acetate + H(+)</text>
        <dbReference type="Rhea" id="RHEA:57060"/>
        <dbReference type="ChEBI" id="CHEBI:15377"/>
        <dbReference type="ChEBI" id="CHEBI:15378"/>
        <dbReference type="ChEBI" id="CHEBI:30089"/>
        <dbReference type="ChEBI" id="CHEBI:57967"/>
        <dbReference type="ChEBI" id="CHEBI:83767"/>
        <dbReference type="EC" id="3.1.1.106"/>
    </reaction>
</comment>
<comment type="subunit">
    <text evidence="1">Homodimer. Interacts with RNase III.</text>
</comment>
<comment type="similarity">
    <text evidence="1">Belongs to the MacroD-type family. YmdB subfamily.</text>
</comment>
<proteinExistence type="inferred from homology"/>
<feature type="chain" id="PRO_0000089193" description="O-acetyl-ADP-ribose deacetylase">
    <location>
        <begin position="1"/>
        <end position="177"/>
    </location>
</feature>
<feature type="domain" description="Macro" evidence="1">
    <location>
        <begin position="1"/>
        <end position="175"/>
    </location>
</feature>
<feature type="active site" description="Proton acceptor" evidence="1">
    <location>
        <position position="35"/>
    </location>
</feature>
<feature type="binding site" evidence="1">
    <location>
        <begin position="11"/>
        <end position="12"/>
    </location>
    <ligand>
        <name>substrate</name>
    </ligand>
</feature>
<feature type="binding site" evidence="1">
    <location>
        <position position="25"/>
    </location>
    <ligand>
        <name>substrate</name>
    </ligand>
</feature>
<feature type="binding site" evidence="1">
    <location>
        <begin position="33"/>
        <end position="35"/>
    </location>
    <ligand>
        <name>substrate</name>
    </ligand>
</feature>
<feature type="binding site" evidence="1">
    <location>
        <begin position="122"/>
        <end position="126"/>
    </location>
    <ligand>
        <name>substrate</name>
    </ligand>
</feature>
<name>YMDB_ECO57</name>
<organism>
    <name type="scientific">Escherichia coli O157:H7</name>
    <dbReference type="NCBI Taxonomy" id="83334"/>
    <lineage>
        <taxon>Bacteria</taxon>
        <taxon>Pseudomonadati</taxon>
        <taxon>Pseudomonadota</taxon>
        <taxon>Gammaproteobacteria</taxon>
        <taxon>Enterobacterales</taxon>
        <taxon>Enterobacteriaceae</taxon>
        <taxon>Escherichia</taxon>
    </lineage>
</organism>
<evidence type="ECO:0000255" key="1">
    <source>
        <dbReference type="HAMAP-Rule" id="MF_01205"/>
    </source>
</evidence>
<reference key="1">
    <citation type="journal article" date="2001" name="Nature">
        <title>Genome sequence of enterohaemorrhagic Escherichia coli O157:H7.</title>
        <authorList>
            <person name="Perna N.T."/>
            <person name="Plunkett G. III"/>
            <person name="Burland V."/>
            <person name="Mau B."/>
            <person name="Glasner J.D."/>
            <person name="Rose D.J."/>
            <person name="Mayhew G.F."/>
            <person name="Evans P.S."/>
            <person name="Gregor J."/>
            <person name="Kirkpatrick H.A."/>
            <person name="Posfai G."/>
            <person name="Hackett J."/>
            <person name="Klink S."/>
            <person name="Boutin A."/>
            <person name="Shao Y."/>
            <person name="Miller L."/>
            <person name="Grotbeck E.J."/>
            <person name="Davis N.W."/>
            <person name="Lim A."/>
            <person name="Dimalanta E.T."/>
            <person name="Potamousis K."/>
            <person name="Apodaca J."/>
            <person name="Anantharaman T.S."/>
            <person name="Lin J."/>
            <person name="Yen G."/>
            <person name="Schwartz D.C."/>
            <person name="Welch R.A."/>
            <person name="Blattner F.R."/>
        </authorList>
    </citation>
    <scope>NUCLEOTIDE SEQUENCE [LARGE SCALE GENOMIC DNA]</scope>
    <source>
        <strain>O157:H7 / EDL933 / ATCC 700927 / EHEC</strain>
    </source>
</reference>
<reference key="2">
    <citation type="journal article" date="2001" name="DNA Res.">
        <title>Complete genome sequence of enterohemorrhagic Escherichia coli O157:H7 and genomic comparison with a laboratory strain K-12.</title>
        <authorList>
            <person name="Hayashi T."/>
            <person name="Makino K."/>
            <person name="Ohnishi M."/>
            <person name="Kurokawa K."/>
            <person name="Ishii K."/>
            <person name="Yokoyama K."/>
            <person name="Han C.-G."/>
            <person name="Ohtsubo E."/>
            <person name="Nakayama K."/>
            <person name="Murata T."/>
            <person name="Tanaka M."/>
            <person name="Tobe T."/>
            <person name="Iida T."/>
            <person name="Takami H."/>
            <person name="Honda T."/>
            <person name="Sasakawa C."/>
            <person name="Ogasawara N."/>
            <person name="Yasunaga T."/>
            <person name="Kuhara S."/>
            <person name="Shiba T."/>
            <person name="Hattori M."/>
            <person name="Shinagawa H."/>
        </authorList>
    </citation>
    <scope>NUCLEOTIDE SEQUENCE [LARGE SCALE GENOMIC DNA]</scope>
    <source>
        <strain>O157:H7 / Sakai / RIMD 0509952 / EHEC</strain>
    </source>
</reference>
<gene>
    <name evidence="1" type="primary">ymdB</name>
    <name type="ordered locus">Z1679</name>
    <name type="ordered locus">ECs1423</name>
</gene>
<sequence>MKTRIHVVQGDITKLAVDVIVNAANPSLMGGGGVDGAIHRAAGPALLDACLKVRQQQGDCPTGHAVITLAGDLPAKAVVHTVGPVWRGGEQNEDQLLQDAYLNSLRLVAANSYTSVAFPAISTGVYGYPRAAAAEIAVKTVSEFITRHALPEQVYFVCYDEENAHLYERLLTQQGDE</sequence>
<accession>P0A8D8</accession>
<accession>P75918</accession>
<keyword id="KW-0378">Hydrolase</keyword>
<keyword id="KW-1185">Reference proteome</keyword>
<protein>
    <recommendedName>
        <fullName evidence="1">O-acetyl-ADP-ribose deacetylase</fullName>
        <ecNumber evidence="1">3.1.1.106</ecNumber>
    </recommendedName>
    <alternativeName>
        <fullName evidence="1">Regulator of RNase III activity</fullName>
    </alternativeName>
</protein>
<dbReference type="EC" id="3.1.1.106" evidence="1"/>
<dbReference type="EMBL" id="AE005174">
    <property type="protein sequence ID" value="AAG55791.1"/>
    <property type="molecule type" value="Genomic_DNA"/>
</dbReference>
<dbReference type="EMBL" id="BA000007">
    <property type="protein sequence ID" value="BAB34846.1"/>
    <property type="molecule type" value="Genomic_DNA"/>
</dbReference>
<dbReference type="PIR" id="C85666">
    <property type="entry name" value="C85666"/>
</dbReference>
<dbReference type="PIR" id="G90806">
    <property type="entry name" value="G90806"/>
</dbReference>
<dbReference type="RefSeq" id="NP_309450.1">
    <property type="nucleotide sequence ID" value="NC_002695.1"/>
</dbReference>
<dbReference type="RefSeq" id="WP_000857405.1">
    <property type="nucleotide sequence ID" value="NZ_VOAI01000018.1"/>
</dbReference>
<dbReference type="SMR" id="P0A8D8"/>
<dbReference type="STRING" id="155864.Z1679"/>
<dbReference type="GeneID" id="912957"/>
<dbReference type="GeneID" id="93776369"/>
<dbReference type="KEGG" id="ece:Z1679"/>
<dbReference type="KEGG" id="ecs:ECs_1423"/>
<dbReference type="PATRIC" id="fig|386585.9.peg.1524"/>
<dbReference type="eggNOG" id="COG2110">
    <property type="taxonomic scope" value="Bacteria"/>
</dbReference>
<dbReference type="HOGENOM" id="CLU_046550_5_1_6"/>
<dbReference type="OMA" id="AKWVIHT"/>
<dbReference type="Proteomes" id="UP000000558">
    <property type="component" value="Chromosome"/>
</dbReference>
<dbReference type="Proteomes" id="UP000002519">
    <property type="component" value="Chromosome"/>
</dbReference>
<dbReference type="GO" id="GO:0061463">
    <property type="term" value="F:O-acetyl-ADP-ribose deacetylase activity"/>
    <property type="evidence" value="ECO:0007669"/>
    <property type="project" value="UniProtKB-EC"/>
</dbReference>
<dbReference type="GO" id="GO:0001883">
    <property type="term" value="F:purine nucleoside binding"/>
    <property type="evidence" value="ECO:0007669"/>
    <property type="project" value="UniProtKB-UniRule"/>
</dbReference>
<dbReference type="GO" id="GO:0008428">
    <property type="term" value="F:ribonuclease inhibitor activity"/>
    <property type="evidence" value="ECO:0007669"/>
    <property type="project" value="UniProtKB-UniRule"/>
</dbReference>
<dbReference type="GO" id="GO:0042278">
    <property type="term" value="P:purine nucleoside metabolic process"/>
    <property type="evidence" value="ECO:0007669"/>
    <property type="project" value="UniProtKB-UniRule"/>
</dbReference>
<dbReference type="CDD" id="cd02908">
    <property type="entry name" value="Macro_OAADPr_deacetylase"/>
    <property type="match status" value="1"/>
</dbReference>
<dbReference type="FunFam" id="3.40.220.10:FF:000003">
    <property type="entry name" value="O-acetyl-ADP-ribose deacetylase MACROD2"/>
    <property type="match status" value="1"/>
</dbReference>
<dbReference type="Gene3D" id="3.40.220.10">
    <property type="entry name" value="Leucine Aminopeptidase, subunit E, domain 1"/>
    <property type="match status" value="1"/>
</dbReference>
<dbReference type="HAMAP" id="MF_01205">
    <property type="entry name" value="YmdB"/>
    <property type="match status" value="1"/>
</dbReference>
<dbReference type="InterPro" id="IPR002589">
    <property type="entry name" value="Macro_dom"/>
</dbReference>
<dbReference type="InterPro" id="IPR043472">
    <property type="entry name" value="Macro_dom-like"/>
</dbReference>
<dbReference type="InterPro" id="IPR024900">
    <property type="entry name" value="O-Ac-ADP-ribose_deAcase"/>
</dbReference>
<dbReference type="NCBIfam" id="NF001660">
    <property type="entry name" value="PRK00431.1-1"/>
    <property type="match status" value="1"/>
</dbReference>
<dbReference type="NCBIfam" id="NF001664">
    <property type="entry name" value="PRK00431.1-6"/>
    <property type="match status" value="1"/>
</dbReference>
<dbReference type="PANTHER" id="PTHR11106">
    <property type="entry name" value="GANGLIOSIDE INDUCED DIFFERENTIATION ASSOCIATED PROTEIN 2-RELATED"/>
    <property type="match status" value="1"/>
</dbReference>
<dbReference type="PANTHER" id="PTHR11106:SF27">
    <property type="entry name" value="MACRO DOMAIN-CONTAINING PROTEIN"/>
    <property type="match status" value="1"/>
</dbReference>
<dbReference type="Pfam" id="PF01661">
    <property type="entry name" value="Macro"/>
    <property type="match status" value="1"/>
</dbReference>
<dbReference type="SMART" id="SM00506">
    <property type="entry name" value="A1pp"/>
    <property type="match status" value="1"/>
</dbReference>
<dbReference type="SUPFAM" id="SSF52949">
    <property type="entry name" value="Macro domain-like"/>
    <property type="match status" value="1"/>
</dbReference>
<dbReference type="PROSITE" id="PS51154">
    <property type="entry name" value="MACRO"/>
    <property type="match status" value="1"/>
</dbReference>